<protein>
    <recommendedName>
        <fullName evidence="1">Peptide chain release factor 1</fullName>
        <shortName evidence="1">RF-1</shortName>
    </recommendedName>
</protein>
<name>RF1_STRA1</name>
<evidence type="ECO:0000255" key="1">
    <source>
        <dbReference type="HAMAP-Rule" id="MF_00093"/>
    </source>
</evidence>
<reference key="1">
    <citation type="journal article" date="2005" name="Proc. Natl. Acad. Sci. U.S.A.">
        <title>Genome analysis of multiple pathogenic isolates of Streptococcus agalactiae: implications for the microbial 'pan-genome'.</title>
        <authorList>
            <person name="Tettelin H."/>
            <person name="Masignani V."/>
            <person name="Cieslewicz M.J."/>
            <person name="Donati C."/>
            <person name="Medini D."/>
            <person name="Ward N.L."/>
            <person name="Angiuoli S.V."/>
            <person name="Crabtree J."/>
            <person name="Jones A.L."/>
            <person name="Durkin A.S."/>
            <person name="DeBoy R.T."/>
            <person name="Davidsen T.M."/>
            <person name="Mora M."/>
            <person name="Scarselli M."/>
            <person name="Margarit y Ros I."/>
            <person name="Peterson J.D."/>
            <person name="Hauser C.R."/>
            <person name="Sundaram J.P."/>
            <person name="Nelson W.C."/>
            <person name="Madupu R."/>
            <person name="Brinkac L.M."/>
            <person name="Dodson R.J."/>
            <person name="Rosovitz M.J."/>
            <person name="Sullivan S.A."/>
            <person name="Daugherty S.C."/>
            <person name="Haft D.H."/>
            <person name="Selengut J."/>
            <person name="Gwinn M.L."/>
            <person name="Zhou L."/>
            <person name="Zafar N."/>
            <person name="Khouri H."/>
            <person name="Radune D."/>
            <person name="Dimitrov G."/>
            <person name="Watkins K."/>
            <person name="O'Connor K.J."/>
            <person name="Smith S."/>
            <person name="Utterback T.R."/>
            <person name="White O."/>
            <person name="Rubens C.E."/>
            <person name="Grandi G."/>
            <person name="Madoff L.C."/>
            <person name="Kasper D.L."/>
            <person name="Telford J.L."/>
            <person name="Wessels M.R."/>
            <person name="Rappuoli R."/>
            <person name="Fraser C.M."/>
        </authorList>
    </citation>
    <scope>NUCLEOTIDE SEQUENCE [LARGE SCALE GENOMIC DNA]</scope>
    <source>
        <strain>ATCC 27591 / A909 / CDC SS700</strain>
    </source>
</reference>
<accession>Q3K119</accession>
<proteinExistence type="inferred from homology"/>
<sequence length="359" mass="40599">MNIYDQLQAVEDRYEELGELLSDPDVVSDTKRFMELSREEANTRETVTAYREYKQVIQNISDAEEMIKDASGDAELEEMAKEELKESKAAKEEYEEKLKILLLPKDPNDDKNIILEIRGAAGGDEAALFAGDLLTMYQKYAETQGWRFEVMESSVNGVGGIKEVVAMVSGQSVYSKLKYESGAHRVQRVPVTESQGRVHTSTATVLVMPEVEEVEYEIDQKDLRVDIYHASGAGGQNVNKVATAVRMVHIPTGIKVEMQEERTQQKNRDKAMKIIRARVADHFAQIAQDEQDAERKSTVGTGDRSERIRTYNFPQNRVTDHRIGLTLQKLDTILSGKMDEVIDALVMYDQTQKLEALNK</sequence>
<gene>
    <name evidence="1" type="primary">prfA</name>
    <name type="ordered locus">SAK_1163</name>
</gene>
<feature type="chain" id="PRO_0000263363" description="Peptide chain release factor 1">
    <location>
        <begin position="1"/>
        <end position="359"/>
    </location>
</feature>
<feature type="modified residue" description="N5-methylglutamine" evidence="1">
    <location>
        <position position="236"/>
    </location>
</feature>
<organism>
    <name type="scientific">Streptococcus agalactiae serotype Ia (strain ATCC 27591 / A909 / CDC SS700)</name>
    <dbReference type="NCBI Taxonomy" id="205921"/>
    <lineage>
        <taxon>Bacteria</taxon>
        <taxon>Bacillati</taxon>
        <taxon>Bacillota</taxon>
        <taxon>Bacilli</taxon>
        <taxon>Lactobacillales</taxon>
        <taxon>Streptococcaceae</taxon>
        <taxon>Streptococcus</taxon>
    </lineage>
</organism>
<comment type="function">
    <text evidence="1">Peptide chain release factor 1 directs the termination of translation in response to the peptide chain termination codons UAG and UAA.</text>
</comment>
<comment type="subcellular location">
    <subcellularLocation>
        <location evidence="1">Cytoplasm</location>
    </subcellularLocation>
</comment>
<comment type="PTM">
    <text evidence="1">Methylated by PrmC. Methylation increases the termination efficiency of RF1.</text>
</comment>
<comment type="similarity">
    <text evidence="1">Belongs to the prokaryotic/mitochondrial release factor family.</text>
</comment>
<dbReference type="EMBL" id="CP000114">
    <property type="protein sequence ID" value="ABA45878.1"/>
    <property type="molecule type" value="Genomic_DNA"/>
</dbReference>
<dbReference type="RefSeq" id="WP_001028823.1">
    <property type="nucleotide sequence ID" value="NC_007432.1"/>
</dbReference>
<dbReference type="SMR" id="Q3K119"/>
<dbReference type="KEGG" id="sak:SAK_1163"/>
<dbReference type="HOGENOM" id="CLU_036856_0_1_9"/>
<dbReference type="GO" id="GO:0005737">
    <property type="term" value="C:cytoplasm"/>
    <property type="evidence" value="ECO:0007669"/>
    <property type="project" value="UniProtKB-SubCell"/>
</dbReference>
<dbReference type="GO" id="GO:0016149">
    <property type="term" value="F:translation release factor activity, codon specific"/>
    <property type="evidence" value="ECO:0007669"/>
    <property type="project" value="UniProtKB-UniRule"/>
</dbReference>
<dbReference type="FunFam" id="3.30.160.20:FF:000027">
    <property type="entry name" value="Peptide chain release factor 1"/>
    <property type="match status" value="1"/>
</dbReference>
<dbReference type="FunFam" id="3.30.70.1660:FF:000002">
    <property type="entry name" value="Peptide chain release factor 1"/>
    <property type="match status" value="1"/>
</dbReference>
<dbReference type="FunFam" id="3.30.70.1660:FF:000004">
    <property type="entry name" value="Peptide chain release factor 1"/>
    <property type="match status" value="1"/>
</dbReference>
<dbReference type="Gene3D" id="3.30.160.20">
    <property type="match status" value="1"/>
</dbReference>
<dbReference type="Gene3D" id="3.30.70.1660">
    <property type="match status" value="2"/>
</dbReference>
<dbReference type="Gene3D" id="6.10.140.1950">
    <property type="match status" value="1"/>
</dbReference>
<dbReference type="HAMAP" id="MF_00093">
    <property type="entry name" value="Rel_fac_1"/>
    <property type="match status" value="1"/>
</dbReference>
<dbReference type="InterPro" id="IPR005139">
    <property type="entry name" value="PCRF"/>
</dbReference>
<dbReference type="InterPro" id="IPR000352">
    <property type="entry name" value="Pep_chain_release_fac_I"/>
</dbReference>
<dbReference type="InterPro" id="IPR045853">
    <property type="entry name" value="Pep_chain_release_fac_I_sf"/>
</dbReference>
<dbReference type="InterPro" id="IPR050057">
    <property type="entry name" value="Prokaryotic/Mito_RF"/>
</dbReference>
<dbReference type="InterPro" id="IPR004373">
    <property type="entry name" value="RF-1"/>
</dbReference>
<dbReference type="NCBIfam" id="TIGR00019">
    <property type="entry name" value="prfA"/>
    <property type="match status" value="1"/>
</dbReference>
<dbReference type="NCBIfam" id="NF001859">
    <property type="entry name" value="PRK00591.1"/>
    <property type="match status" value="1"/>
</dbReference>
<dbReference type="PANTHER" id="PTHR43804">
    <property type="entry name" value="LD18447P"/>
    <property type="match status" value="1"/>
</dbReference>
<dbReference type="PANTHER" id="PTHR43804:SF7">
    <property type="entry name" value="LD18447P"/>
    <property type="match status" value="1"/>
</dbReference>
<dbReference type="Pfam" id="PF03462">
    <property type="entry name" value="PCRF"/>
    <property type="match status" value="1"/>
</dbReference>
<dbReference type="Pfam" id="PF00472">
    <property type="entry name" value="RF-1"/>
    <property type="match status" value="1"/>
</dbReference>
<dbReference type="SMART" id="SM00937">
    <property type="entry name" value="PCRF"/>
    <property type="match status" value="1"/>
</dbReference>
<dbReference type="SUPFAM" id="SSF75620">
    <property type="entry name" value="Release factor"/>
    <property type="match status" value="1"/>
</dbReference>
<dbReference type="PROSITE" id="PS00745">
    <property type="entry name" value="RF_PROK_I"/>
    <property type="match status" value="1"/>
</dbReference>
<keyword id="KW-0963">Cytoplasm</keyword>
<keyword id="KW-0488">Methylation</keyword>
<keyword id="KW-0648">Protein biosynthesis</keyword>